<evidence type="ECO:0000269" key="1">
    <source>
    </source>
</evidence>
<evidence type="ECO:0000269" key="2">
    <source>
    </source>
</evidence>
<evidence type="ECO:0000269" key="3">
    <source>
    </source>
</evidence>
<evidence type="ECO:0000269" key="4">
    <source>
    </source>
</evidence>
<evidence type="ECO:0000269" key="5">
    <source>
    </source>
</evidence>
<evidence type="ECO:0000305" key="6"/>
<evidence type="ECO:0007829" key="7">
    <source>
        <dbReference type="PDB" id="1WFB"/>
    </source>
</evidence>
<sequence>MALSLFTVGQLIFLFWTMRITEASPDPAAKAAPAAAAAPAAAAPDTASDAAAAAALTAANAKAAAELTAANAAAAAAATARG</sequence>
<proteinExistence type="evidence at protein level"/>
<accession>P04002</accession>
<accession>Q7SIC4</accession>
<reference key="1">
    <citation type="journal article" date="1982" name="Proc. Natl. Acad. Sci. U.S.A.">
        <title>DNA sequence coding for an antifreeze protein precursor from winter flounder.</title>
        <authorList>
            <person name="Davies P.L."/>
            <person name="Roach A.H."/>
            <person name="Hew C.-L."/>
        </authorList>
    </citation>
    <scope>NUCLEOTIDE SEQUENCE [GENOMIC DNA]</scope>
    <scope>VARIANT ASP-70</scope>
    <scope>FUNCTION</scope>
    <scope>SUBCELLULAR LOCATION</scope>
    <scope>TISSUE SPECIFICITY</scope>
    <scope>PARTIAL PROTEIN SEQUENCE</scope>
</reference>
<reference key="2">
    <citation type="journal article" date="1984" name="J. Biol. Chem.">
        <title>Antifreeze protein genes of the winter flounder.</title>
        <authorList>
            <person name="Davies P.L."/>
            <person name="Hough C."/>
            <person name="Scott G.K."/>
            <person name="Ng N.F.L."/>
            <person name="White B.N."/>
            <person name="Hew C.-L."/>
        </authorList>
    </citation>
    <scope>NUCLEOTIDE SEQUENCE [GENOMIC DNA]</scope>
</reference>
<reference key="3">
    <citation type="journal article" date="1988" name="J. Mol. Evol.">
        <title>Differential amplification of antifreeze protein genes in the pleuronectinae.</title>
        <authorList>
            <person name="Scott G.K."/>
            <person name="Davies P.L."/>
            <person name="Kao M.H."/>
            <person name="Fletcher G.L."/>
        </authorList>
    </citation>
    <scope>NUCLEOTIDE SEQUENCE [GENOMIC DNA]</scope>
</reference>
<reference key="4">
    <citation type="journal article" date="1992" name="Gene">
        <title>Conservation of antifreeze protein-encoding genes in tandem repeats.</title>
        <authorList>
            <person name="Davies P.L."/>
        </authorList>
    </citation>
    <scope>NUCLEOTIDE SEQUENCE [GENOMIC DNA]</scope>
    <scope>VARIANT VAL-36</scope>
    <source>
        <tissue>Testis</tissue>
    </source>
</reference>
<reference key="5">
    <citation type="journal article" date="1986" name="Eur. J. Biochem.">
        <title>Biosynthesis of antifreeze polypeptides in the winter flounder. Characterization and seasonal occurrence of precursor polypeptides.</title>
        <authorList>
            <person name="Hew C.-L."/>
            <person name="Wang N.-C."/>
            <person name="Yan S."/>
            <person name="Cai H."/>
            <person name="Sclater A."/>
            <person name="Fletcher G.L."/>
        </authorList>
    </citation>
    <scope>PROTEIN SEQUENCE OF 24-28</scope>
    <scope>FUNCTION</scope>
    <scope>INDUCTION</scope>
    <scope>TISSUE SPECIFICITY</scope>
    <scope>AMIDATION</scope>
    <source>
        <tissue>Liver</tissue>
    </source>
</reference>
<reference key="6">
    <citation type="journal article" date="1992" name="J. Mol. Biol.">
        <title>Energy-optimized structure of antifreeze protein and its binding mechanism.</title>
        <authorList>
            <person name="Chou K.-C."/>
        </authorList>
    </citation>
    <scope>3D-STRUCTURE MODELING OF 45-81</scope>
</reference>
<reference key="7">
    <citation type="journal article" date="1995" name="Nature">
        <title>Ice-binding structure and mechanism of an antifreeze protein from winter flounder.</title>
        <authorList>
            <person name="Sicheri F."/>
            <person name="Yang D.S.C."/>
        </authorList>
    </citation>
    <scope>X-RAY CRYSTALLOGRAPHY (1.5 ANGSTROMS) OF 45-81</scope>
    <scope>AMIDATION AT ARG-81</scope>
</reference>
<reference key="8">
    <citation type="journal article" date="2002" name="Eur. J. Biochem.">
        <title>Solution structure of a hydrophobic analogue of the winter flounder antifreeze protein.</title>
        <authorList>
            <person name="Liepinsh E."/>
            <person name="Otting G."/>
            <person name="Harding M.M."/>
            <person name="Ward L.G."/>
            <person name="Mackay J.P."/>
            <person name="Haymet A.D."/>
        </authorList>
    </citation>
    <scope>STRUCTURE BY NMR OF 45-81</scope>
    <scope>AMIDATION AT ARG-81</scope>
    <scope>MUTAGENESIS OF THR-46; ALA-51; ALA-55; THR-57; THR-68; ALA-73; ALA-77 AND THR-79</scope>
</reference>
<keyword id="KW-0002">3D-structure</keyword>
<keyword id="KW-0027">Amidation</keyword>
<keyword id="KW-0047">Antifreeze protein</keyword>
<keyword id="KW-0903">Direct protein sequencing</keyword>
<keyword id="KW-0677">Repeat</keyword>
<keyword id="KW-0964">Secreted</keyword>
<keyword id="KW-0732">Signal</keyword>
<comment type="function">
    <text evidence="3 4">Contributes to protect fish blood from freezing at subzero sea water temperatures. Lowers the blood freezing point. Binds to nascent ice crystals and prevents further growth.</text>
</comment>
<comment type="interaction">
    <interactant intactId="EBI-11769728">
        <id>P04002</id>
    </interactant>
    <interactant intactId="EBI-11769728">
        <id>P04002</id>
        <label>-</label>
    </interactant>
    <organismsDiffer>false</organismsDiffer>
    <experiments>3</experiments>
</comment>
<comment type="subcellular location">
    <subcellularLocation>
        <location evidence="4">Secreted</location>
    </subcellularLocation>
</comment>
<comment type="tissue specificity">
    <text evidence="3 4">Detected in liver and in blood serum (at protein level).</text>
</comment>
<comment type="induction">
    <text evidence="3">By winter conditions, at least in part by water temperatures of below 8 degrees Celsius.</text>
</comment>
<comment type="similarity">
    <text evidence="6">Belongs to the type-I AFP family.</text>
</comment>
<organism>
    <name type="scientific">Pseudopleuronectes americanus</name>
    <name type="common">Winter flounder</name>
    <name type="synonym">Pleuronectes americanus</name>
    <dbReference type="NCBI Taxonomy" id="8265"/>
    <lineage>
        <taxon>Eukaryota</taxon>
        <taxon>Metazoa</taxon>
        <taxon>Chordata</taxon>
        <taxon>Craniata</taxon>
        <taxon>Vertebrata</taxon>
        <taxon>Euteleostomi</taxon>
        <taxon>Actinopterygii</taxon>
        <taxon>Neopterygii</taxon>
        <taxon>Teleostei</taxon>
        <taxon>Neoteleostei</taxon>
        <taxon>Acanthomorphata</taxon>
        <taxon>Carangaria</taxon>
        <taxon>Pleuronectiformes</taxon>
        <taxon>Pleuronectoidei</taxon>
        <taxon>Pleuronectidae</taxon>
        <taxon>Pseudopleuronectes</taxon>
    </lineage>
</organism>
<dbReference type="EMBL" id="L00138">
    <property type="protein sequence ID" value="AAB59964.1"/>
    <property type="molecule type" value="Genomic_DNA"/>
</dbReference>
<dbReference type="EMBL" id="L29178">
    <property type="protein sequence ID" value="AAB59964.1"/>
    <property type="status" value="JOINED"/>
    <property type="molecule type" value="Genomic_DNA"/>
</dbReference>
<dbReference type="EMBL" id="X07506">
    <property type="protein sequence ID" value="CAA30389.1"/>
    <property type="molecule type" value="Genomic_DNA"/>
</dbReference>
<dbReference type="EMBL" id="M62414">
    <property type="protein sequence ID" value="AAA49469.1"/>
    <property type="molecule type" value="Genomic_DNA"/>
</dbReference>
<dbReference type="EMBL" id="M62416">
    <property type="protein sequence ID" value="AAA49471.1"/>
    <property type="molecule type" value="Genomic_DNA"/>
</dbReference>
<dbReference type="EMBL" id="M62417">
    <property type="protein sequence ID" value="AAA49472.1"/>
    <property type="molecule type" value="Genomic_DNA"/>
</dbReference>
<dbReference type="PIR" id="A05161">
    <property type="entry name" value="A05161"/>
</dbReference>
<dbReference type="PIR" id="JS0704">
    <property type="entry name" value="FDFLAW"/>
</dbReference>
<dbReference type="PIR" id="JS0706">
    <property type="entry name" value="JS0706"/>
</dbReference>
<dbReference type="PIR" id="S02326">
    <property type="entry name" value="S02326"/>
</dbReference>
<dbReference type="PDB" id="1J5B">
    <property type="method" value="NMR"/>
    <property type="chains" value="A=58-81"/>
</dbReference>
<dbReference type="PDB" id="1WFA">
    <property type="method" value="X-ray"/>
    <property type="resolution" value="1.70 A"/>
    <property type="chains" value="A/B=45-81"/>
</dbReference>
<dbReference type="PDB" id="1WFB">
    <property type="method" value="X-ray"/>
    <property type="resolution" value="1.50 A"/>
    <property type="chains" value="A/B=45-81"/>
</dbReference>
<dbReference type="PDBsum" id="1J5B"/>
<dbReference type="PDBsum" id="1WFA"/>
<dbReference type="PDBsum" id="1WFB"/>
<dbReference type="SMR" id="P04002"/>
<dbReference type="MINT" id="P04002"/>
<dbReference type="EvolutionaryTrace" id="P04002"/>
<dbReference type="GO" id="GO:0005615">
    <property type="term" value="C:extracellular space"/>
    <property type="evidence" value="ECO:0000314"/>
    <property type="project" value="UniProtKB"/>
</dbReference>
<dbReference type="GO" id="GO:0016172">
    <property type="term" value="F:antifreeze activity"/>
    <property type="evidence" value="ECO:0007669"/>
    <property type="project" value="InterPro"/>
</dbReference>
<dbReference type="GO" id="GO:0050825">
    <property type="term" value="F:ice binding"/>
    <property type="evidence" value="ECO:0000304"/>
    <property type="project" value="UniProtKB"/>
</dbReference>
<dbReference type="GO" id="GO:0042802">
    <property type="term" value="F:identical protein binding"/>
    <property type="evidence" value="ECO:0000353"/>
    <property type="project" value="IntAct"/>
</dbReference>
<dbReference type="InterPro" id="IPR000104">
    <property type="entry name" value="Antifreeze_1"/>
</dbReference>
<dbReference type="PRINTS" id="PR00308">
    <property type="entry name" value="ANTIFREEZEI"/>
</dbReference>
<name>ANPA_PSEAM</name>
<protein>
    <recommendedName>
        <fullName>Ice-structuring protein A</fullName>
        <shortName>ISP A</shortName>
    </recommendedName>
    <alternativeName>
        <fullName>Antifreeze protein A</fullName>
    </alternativeName>
    <alternativeName>
        <fullName>HPLC6</fullName>
    </alternativeName>
</protein>
<feature type="signal peptide" evidence="3">
    <location>
        <begin position="1"/>
        <end position="23"/>
    </location>
</feature>
<feature type="propeptide" id="PRO_0000001685" description="Removed by a dipeptidylpeptidase" evidence="6">
    <location>
        <begin position="24"/>
        <end position="44"/>
    </location>
</feature>
<feature type="chain" id="PRO_0000001686" description="Ice-structuring protein A">
    <location>
        <begin position="45"/>
        <end position="81"/>
    </location>
</feature>
<feature type="modified residue" description="Arginine amide" evidence="1 5">
    <location>
        <position position="81"/>
    </location>
</feature>
<feature type="sequence variant" evidence="2">
    <original>A</original>
    <variation>V</variation>
    <location>
        <position position="36"/>
    </location>
</feature>
<feature type="sequence variant" evidence="4">
    <original>A</original>
    <variation>D</variation>
    <location>
        <position position="70"/>
    </location>
</feature>
<feature type="mutagenesis site" description="No significant effect on 3D structure; when associated with K-51; E-55; V-57; V-68; K-73; E-77 and V-79." evidence="1">
    <original>T</original>
    <variation>V</variation>
    <location>
        <position position="46"/>
    </location>
</feature>
<feature type="mutagenesis site" description="No significant effect on 3D structure; when associated with V-46; E-55; V-57; V-68; K-73; E-77 and V-79." evidence="1">
    <original>A</original>
    <variation>K</variation>
    <location>
        <position position="51"/>
    </location>
</feature>
<feature type="mutagenesis site" description="No significant effect on 3D structure; when associated with V-46; K-51; V-57; V-68; K-73; E-77 and V-79." evidence="1">
    <original>A</original>
    <variation>E</variation>
    <location>
        <position position="55"/>
    </location>
</feature>
<feature type="mutagenesis site" description="No significant effect on 3D structure; when associated with V-46; K-51; E-55; V-68; K-73; E-77 and V-79." evidence="1">
    <original>T</original>
    <variation>V</variation>
    <location>
        <position position="57"/>
    </location>
</feature>
<feature type="mutagenesis site" description="No significant effect on 3D structure; when associated with V-46; K-51; E-55; V-57; K-73; E-77 and V-79." evidence="1">
    <original>T</original>
    <variation>V</variation>
    <location>
        <position position="68"/>
    </location>
</feature>
<feature type="mutagenesis site" description="No significant effect on 3D structure; when associated with V-46; K-51; E-55; V-57; V-68; E-77 and V-79." evidence="1">
    <original>A</original>
    <variation>K</variation>
    <location>
        <position position="73"/>
    </location>
</feature>
<feature type="mutagenesis site" description="No significant effect on 3D structure; when associated with V-46; K-51; E-55; V-57; V-68; K-73 and V-79." evidence="1">
    <original>A</original>
    <variation>E</variation>
    <location>
        <position position="77"/>
    </location>
</feature>
<feature type="mutagenesis site" description="No significant effect on 3D structure; when associated with V-46; K-51; E-55; V-57; V-68; K-73 and E-77." evidence="1">
    <original>T</original>
    <variation>V</variation>
    <location>
        <position position="79"/>
    </location>
</feature>
<feature type="sequence conflict" description="In Ref. 3; CAA30389 and 4; AAA49469." evidence="6" ref="3 4">
    <original>S</original>
    <variation>R</variation>
    <location>
        <position position="24"/>
    </location>
</feature>
<feature type="helix" evidence="7">
    <location>
        <begin position="46"/>
        <end position="79"/>
    </location>
</feature>